<dbReference type="EC" id="2.7.7.6"/>
<dbReference type="EMBL" id="L42023">
    <property type="protein sequence ID" value="AAC23389.1"/>
    <property type="molecule type" value="Genomic_DNA"/>
</dbReference>
<dbReference type="PIR" id="G64139">
    <property type="entry name" value="G64139"/>
</dbReference>
<dbReference type="RefSeq" id="NP_439886.1">
    <property type="nucleotide sequence ID" value="NC_000907.1"/>
</dbReference>
<dbReference type="SMR" id="P43740"/>
<dbReference type="STRING" id="71421.HI_1742"/>
<dbReference type="EnsemblBacteria" id="AAC23389">
    <property type="protein sequence ID" value="AAC23389"/>
    <property type="gene ID" value="HI_1742"/>
</dbReference>
<dbReference type="KEGG" id="hin:HI_1742"/>
<dbReference type="PATRIC" id="fig|71421.8.peg.1825"/>
<dbReference type="eggNOG" id="COG1758">
    <property type="taxonomic scope" value="Bacteria"/>
</dbReference>
<dbReference type="HOGENOM" id="CLU_125406_5_3_6"/>
<dbReference type="OrthoDB" id="9796300at2"/>
<dbReference type="PhylomeDB" id="P43740"/>
<dbReference type="BioCyc" id="HINF71421:G1GJ1-1765-MONOMER"/>
<dbReference type="Proteomes" id="UP000000579">
    <property type="component" value="Chromosome"/>
</dbReference>
<dbReference type="GO" id="GO:0000345">
    <property type="term" value="C:cytosolic DNA-directed RNA polymerase complex"/>
    <property type="evidence" value="ECO:0000318"/>
    <property type="project" value="GO_Central"/>
</dbReference>
<dbReference type="GO" id="GO:0001000">
    <property type="term" value="F:bacterial-type RNA polymerase core enzyme binding"/>
    <property type="evidence" value="ECO:0000318"/>
    <property type="project" value="GO_Central"/>
</dbReference>
<dbReference type="GO" id="GO:0003677">
    <property type="term" value="F:DNA binding"/>
    <property type="evidence" value="ECO:0007669"/>
    <property type="project" value="UniProtKB-UniRule"/>
</dbReference>
<dbReference type="GO" id="GO:0003899">
    <property type="term" value="F:DNA-directed RNA polymerase activity"/>
    <property type="evidence" value="ECO:0007669"/>
    <property type="project" value="UniProtKB-UniRule"/>
</dbReference>
<dbReference type="GO" id="GO:0006352">
    <property type="term" value="P:DNA-templated transcription initiation"/>
    <property type="evidence" value="ECO:0000318"/>
    <property type="project" value="GO_Central"/>
</dbReference>
<dbReference type="Gene3D" id="3.90.940.10">
    <property type="match status" value="1"/>
</dbReference>
<dbReference type="HAMAP" id="MF_00366">
    <property type="entry name" value="RNApol_bact_RpoZ"/>
    <property type="match status" value="1"/>
</dbReference>
<dbReference type="InterPro" id="IPR003716">
    <property type="entry name" value="DNA-dir_RNA_pol_omega"/>
</dbReference>
<dbReference type="InterPro" id="IPR006110">
    <property type="entry name" value="Pol_omega/Rpo6/RPB6"/>
</dbReference>
<dbReference type="InterPro" id="IPR036161">
    <property type="entry name" value="RPB6/omega-like_sf"/>
</dbReference>
<dbReference type="NCBIfam" id="TIGR00690">
    <property type="entry name" value="rpoZ"/>
    <property type="match status" value="1"/>
</dbReference>
<dbReference type="PANTHER" id="PTHR34476">
    <property type="entry name" value="DNA-DIRECTED RNA POLYMERASE SUBUNIT OMEGA"/>
    <property type="match status" value="1"/>
</dbReference>
<dbReference type="PANTHER" id="PTHR34476:SF1">
    <property type="entry name" value="DNA-DIRECTED RNA POLYMERASE SUBUNIT OMEGA"/>
    <property type="match status" value="1"/>
</dbReference>
<dbReference type="Pfam" id="PF01192">
    <property type="entry name" value="RNA_pol_Rpb6"/>
    <property type="match status" value="1"/>
</dbReference>
<dbReference type="SMART" id="SM01409">
    <property type="entry name" value="RNA_pol_Rpb6"/>
    <property type="match status" value="1"/>
</dbReference>
<dbReference type="SUPFAM" id="SSF63562">
    <property type="entry name" value="RPB6/omega subunit-like"/>
    <property type="match status" value="1"/>
</dbReference>
<accession>P43740</accession>
<feature type="chain" id="PRO_0000128941" description="DNA-directed RNA polymerase subunit omega">
    <location>
        <begin position="1"/>
        <end position="88"/>
    </location>
</feature>
<evidence type="ECO:0000250" key="1"/>
<evidence type="ECO:0000305" key="2"/>
<reference key="1">
    <citation type="journal article" date="1995" name="Science">
        <title>Whole-genome random sequencing and assembly of Haemophilus influenzae Rd.</title>
        <authorList>
            <person name="Fleischmann R.D."/>
            <person name="Adams M.D."/>
            <person name="White O."/>
            <person name="Clayton R.A."/>
            <person name="Kirkness E.F."/>
            <person name="Kerlavage A.R."/>
            <person name="Bult C.J."/>
            <person name="Tomb J.-F."/>
            <person name="Dougherty B.A."/>
            <person name="Merrick J.M."/>
            <person name="McKenney K."/>
            <person name="Sutton G.G."/>
            <person name="FitzHugh W."/>
            <person name="Fields C.A."/>
            <person name="Gocayne J.D."/>
            <person name="Scott J.D."/>
            <person name="Shirley R."/>
            <person name="Liu L.-I."/>
            <person name="Glodek A."/>
            <person name="Kelley J.M."/>
            <person name="Weidman J.F."/>
            <person name="Phillips C.A."/>
            <person name="Spriggs T."/>
            <person name="Hedblom E."/>
            <person name="Cotton M.D."/>
            <person name="Utterback T.R."/>
            <person name="Hanna M.C."/>
            <person name="Nguyen D.T."/>
            <person name="Saudek D.M."/>
            <person name="Brandon R.C."/>
            <person name="Fine L.D."/>
            <person name="Fritchman J.L."/>
            <person name="Fuhrmann J.L."/>
            <person name="Geoghagen N.S.M."/>
            <person name="Gnehm C.L."/>
            <person name="McDonald L.A."/>
            <person name="Small K.V."/>
            <person name="Fraser C.M."/>
            <person name="Smith H.O."/>
            <person name="Venter J.C."/>
        </authorList>
    </citation>
    <scope>NUCLEOTIDE SEQUENCE [LARGE SCALE GENOMIC DNA]</scope>
    <source>
        <strain>ATCC 51907 / DSM 11121 / KW20 / Rd</strain>
    </source>
</reference>
<sequence length="88" mass="9860">MARVTVQDAVEKIGNRFDLILTAARRARQLQLNQSAPLVPEDNDKPTVIALREIEKGLINQDIMDAQEFQKMAKVQETEEAAVALITE</sequence>
<name>RPOZ_HAEIN</name>
<proteinExistence type="inferred from homology"/>
<keyword id="KW-0240">DNA-directed RNA polymerase</keyword>
<keyword id="KW-0548">Nucleotidyltransferase</keyword>
<keyword id="KW-1185">Reference proteome</keyword>
<keyword id="KW-0804">Transcription</keyword>
<keyword id="KW-0808">Transferase</keyword>
<protein>
    <recommendedName>
        <fullName>DNA-directed RNA polymerase subunit omega</fullName>
        <shortName>RNAP omega subunit</shortName>
        <ecNumber>2.7.7.6</ecNumber>
    </recommendedName>
    <alternativeName>
        <fullName>RNA polymerase omega subunit</fullName>
    </alternativeName>
    <alternativeName>
        <fullName>Transcriptase subunit omega</fullName>
    </alternativeName>
</protein>
<gene>
    <name type="primary">rpoZ</name>
    <name type="ordered locus">HI_1742</name>
</gene>
<comment type="function">
    <text evidence="1">Promotes RNA polymerase assembly. Latches the N- and C-terminal regions of the beta' subunit thereby facilitating its interaction with the beta and alpha subunits (By similarity).</text>
</comment>
<comment type="catalytic activity">
    <reaction>
        <text>RNA(n) + a ribonucleoside 5'-triphosphate = RNA(n+1) + diphosphate</text>
        <dbReference type="Rhea" id="RHEA:21248"/>
        <dbReference type="Rhea" id="RHEA-COMP:14527"/>
        <dbReference type="Rhea" id="RHEA-COMP:17342"/>
        <dbReference type="ChEBI" id="CHEBI:33019"/>
        <dbReference type="ChEBI" id="CHEBI:61557"/>
        <dbReference type="ChEBI" id="CHEBI:140395"/>
        <dbReference type="EC" id="2.7.7.6"/>
    </reaction>
</comment>
<comment type="subunit">
    <text evidence="1">The RNAP catalytic core consists of 2 alpha, 1 beta, 1 beta' and 1 omega subunit. When a sigma factor is associated with the core the holoenzyme is formed, which can initiate transcription (By similarity).</text>
</comment>
<comment type="similarity">
    <text evidence="2">Belongs to the RNA polymerase subunit omega family.</text>
</comment>
<organism>
    <name type="scientific">Haemophilus influenzae (strain ATCC 51907 / DSM 11121 / KW20 / Rd)</name>
    <dbReference type="NCBI Taxonomy" id="71421"/>
    <lineage>
        <taxon>Bacteria</taxon>
        <taxon>Pseudomonadati</taxon>
        <taxon>Pseudomonadota</taxon>
        <taxon>Gammaproteobacteria</taxon>
        <taxon>Pasteurellales</taxon>
        <taxon>Pasteurellaceae</taxon>
        <taxon>Haemophilus</taxon>
    </lineage>
</organism>